<sequence>MMDCRDASACQGVGSLCFFPYLNPLVSWHALVLGHLLYLFVVFVMRSIMRGRRALNMSRVLVVYNVLQICLSAAMAINLSPPLKNGVFNLSGKFCPDIEFWMFVHYCSKYIDMLDTVFILCKKKEDQLSFLHVYHHCTIGLIWGILLRNGLANGTAFFGTWINSSVHFLMYSHYLWTSLGYRNPFKFLLTKIQMLQFSLCILHAILVTLLDTQFTLGWNLLQLLYNASLLVLFLNFYMNSRGKGCAIEKKPQ</sequence>
<comment type="function">
    <text evidence="5 6">Involved in the synthesis of fatty acids (PubMed:16923389). Elongates arachidonate and other C20 polyunsaturated fatty acids (PUFAs) with a preference for n-6 PUFAs (PubMed:16923389, PubMed:17222186). Not involved in fatty acid synthesis up to C18 (PubMed:16923389).</text>
</comment>
<comment type="catalytic activity">
    <reaction evidence="5">
        <text>(5Z,8Z,11Z,14Z)-eicosatetraenoyl-CoA + malonyl-CoA + H(+) = (7Z,10Z,13Z,16Z)-3-oxodocosatetraenoyl-CoA + CO2 + CoA</text>
        <dbReference type="Rhea" id="RHEA:36475"/>
        <dbReference type="ChEBI" id="CHEBI:15378"/>
        <dbReference type="ChEBI" id="CHEBI:16526"/>
        <dbReference type="ChEBI" id="CHEBI:57287"/>
        <dbReference type="ChEBI" id="CHEBI:57368"/>
        <dbReference type="ChEBI" id="CHEBI:57384"/>
        <dbReference type="ChEBI" id="CHEBI:73852"/>
    </reaction>
    <physiologicalReaction direction="left-to-right" evidence="5">
        <dbReference type="Rhea" id="RHEA:36476"/>
    </physiologicalReaction>
</comment>
<comment type="pathway">
    <text evidence="5">Lipid metabolism; fatty acid biosynthesis.</text>
</comment>
<comment type="subcellular location">
    <subcellularLocation>
        <location evidence="2">Membrane</location>
        <topology evidence="2">Multi-pass membrane protein</topology>
    </subcellularLocation>
</comment>
<comment type="disruption phenotype">
    <text evidence="5">Genetic disruption in bloodstream form parasites reduces elongation of arachidonoyl-CoA.</text>
</comment>
<comment type="similarity">
    <text evidence="4">Belongs to the ELO family.</text>
</comment>
<reference evidence="11" key="1">
    <citation type="journal article" date="2005" name="Science">
        <title>Comparative genomics of trypanosomatid parasitic protozoa.</title>
        <authorList>
            <person name="El-Sayed N.M."/>
            <person name="Myler P.J."/>
            <person name="Blandin G."/>
            <person name="Berriman M."/>
            <person name="Crabtree J."/>
            <person name="Aggarwal G."/>
            <person name="Caler E."/>
            <person name="Renauld H."/>
            <person name="Worthey E.A."/>
            <person name="Hertz-Fowler C."/>
            <person name="Ghedin E."/>
            <person name="Peacock C."/>
            <person name="Bartholomeu D.C."/>
            <person name="Haas B.J."/>
            <person name="Tran A.N."/>
            <person name="Wortman J.R."/>
            <person name="Alsmark U.C."/>
            <person name="Angiuoli S."/>
            <person name="Anupama A."/>
            <person name="Badger J."/>
            <person name="Bringaud F."/>
            <person name="Cadag E."/>
            <person name="Carlton J.M."/>
            <person name="Cerqueira G.C."/>
            <person name="Creasy T."/>
            <person name="Delcher A.L."/>
            <person name="Djikeng A."/>
            <person name="Embley T.M."/>
            <person name="Hauser C."/>
            <person name="Ivens A.C."/>
            <person name="Kummerfeld S.K."/>
            <person name="Pereira-Leal J.B."/>
            <person name="Nilsson D."/>
            <person name="Peterson J."/>
            <person name="Salzberg S.L."/>
            <person name="Shallom J."/>
            <person name="Silva J.C."/>
            <person name="Sundaram J."/>
            <person name="Westenberger S."/>
            <person name="White O."/>
            <person name="Melville S.E."/>
            <person name="Donelson J.E."/>
            <person name="Andersson B."/>
            <person name="Stuart K.D."/>
            <person name="Hall N."/>
        </authorList>
    </citation>
    <scope>NUCLEOTIDE SEQUENCE [LARGE SCALE GENOMIC DNA]</scope>
    <source>
        <strain evidence="11">927/4 GUTat10.1</strain>
    </source>
</reference>
<reference evidence="12" key="2">
    <citation type="journal article" date="2005" name="Science">
        <title>The genome of the African trypanosome Trypanosoma brucei.</title>
        <authorList>
            <person name="Berriman M."/>
            <person name="Ghedin E."/>
            <person name="Hertz-Fowler C."/>
            <person name="Blandin G."/>
            <person name="Renauld H."/>
            <person name="Bartholomeu D.C."/>
            <person name="Lennard N.J."/>
            <person name="Caler E."/>
            <person name="Hamlin N.E."/>
            <person name="Haas B."/>
            <person name="Bohme U."/>
            <person name="Hannick L."/>
            <person name="Aslett M.A."/>
            <person name="Shallom J."/>
            <person name="Marcello L."/>
            <person name="Hou L."/>
            <person name="Wickstead B."/>
            <person name="Alsmark U.C.M."/>
            <person name="Arrowsmith C."/>
            <person name="Atkin R.J."/>
            <person name="Barron A.J."/>
            <person name="Bringaud F."/>
            <person name="Brooks K."/>
            <person name="Carrington M."/>
            <person name="Cherevach I."/>
            <person name="Chillingworth T.J."/>
            <person name="Churcher C."/>
            <person name="Clark L.N."/>
            <person name="Corton C.H."/>
            <person name="Cronin A."/>
            <person name="Davies R.M."/>
            <person name="Doggett J."/>
            <person name="Djikeng A."/>
            <person name="Feldblyum T."/>
            <person name="Field M.C."/>
            <person name="Fraser A."/>
            <person name="Goodhead I."/>
            <person name="Hance Z."/>
            <person name="Harper D."/>
            <person name="Harris B.R."/>
            <person name="Hauser H."/>
            <person name="Hostetler J."/>
            <person name="Ivens A."/>
            <person name="Jagels K."/>
            <person name="Johnson D."/>
            <person name="Johnson J."/>
            <person name="Jones K."/>
            <person name="Kerhornou A.X."/>
            <person name="Koo H."/>
            <person name="Larke N."/>
            <person name="Landfear S."/>
            <person name="Larkin C."/>
            <person name="Leech V."/>
            <person name="Line A."/>
            <person name="Lord A."/>
            <person name="Macleod A."/>
            <person name="Mooney P.J."/>
            <person name="Moule S."/>
            <person name="Martin D.M."/>
            <person name="Morgan G.W."/>
            <person name="Mungall K."/>
            <person name="Norbertczak H."/>
            <person name="Ormond D."/>
            <person name="Pai G."/>
            <person name="Peacock C.S."/>
            <person name="Peterson J."/>
            <person name="Quail M.A."/>
            <person name="Rabbinowitsch E."/>
            <person name="Rajandream M.A."/>
            <person name="Reitter C."/>
            <person name="Salzberg S.L."/>
            <person name="Sanders M."/>
            <person name="Schobel S."/>
            <person name="Sharp S."/>
            <person name="Simmonds M."/>
            <person name="Simpson A.J."/>
            <person name="Tallon L."/>
            <person name="Turner C.M."/>
            <person name="Tait A."/>
            <person name="Tivey A.R."/>
            <person name="Van Aken S."/>
            <person name="Walker D."/>
            <person name="Wanless D."/>
            <person name="Wang S."/>
            <person name="White B."/>
            <person name="White O."/>
            <person name="Whitehead S."/>
            <person name="Woodward J."/>
            <person name="Wortman J."/>
            <person name="Adams M.D."/>
            <person name="Embley T.M."/>
            <person name="Gull K."/>
            <person name="Ullu E."/>
            <person name="Barry J.D."/>
            <person name="Fairlamb A.H."/>
            <person name="Opperdoes F."/>
            <person name="Barrell B.G."/>
            <person name="Donelson J.E."/>
            <person name="Hall N."/>
            <person name="Fraser C.M."/>
            <person name="Melville S.E."/>
            <person name="El-Sayed N.M.A."/>
        </authorList>
    </citation>
    <scope>NUCLEOTIDE SEQUENCE [LARGE SCALE GENOMIC DNA]</scope>
    <source>
        <strain evidence="12">927/4 GUTat10.1</strain>
    </source>
</reference>
<reference evidence="9" key="3">
    <citation type="journal article" date="2006" name="Cell">
        <title>Fatty acid synthesis by elongases in trypanosomes.</title>
        <authorList>
            <person name="Lee S.H."/>
            <person name="Stephens J.L."/>
            <person name="Paul K.S."/>
            <person name="Englund P.T."/>
        </authorList>
    </citation>
    <scope>FUNCTION</scope>
    <scope>CATALYTIC ACTIVITY</scope>
    <scope>SUBSTRATE SPECIFICITY</scope>
    <scope>PATHWAY</scope>
    <scope>DISRUPTION PHENOTYPE</scope>
</reference>
<reference evidence="9" key="4">
    <citation type="journal article" date="2007" name="FEBS J.">
        <title>Elongation of polyunsaturated fatty acids in trypanosomatids.</title>
        <authorList>
            <person name="Livore V.I."/>
            <person name="Tripodi K.E."/>
            <person name="Uttaro A.D."/>
        </authorList>
    </citation>
    <scope>FUNCTION</scope>
</reference>
<name>ELO4_TRYB2</name>
<feature type="chain" id="PRO_0000459365" description="Fatty acid elongase 4">
    <location>
        <begin position="1"/>
        <end position="252"/>
    </location>
</feature>
<feature type="transmembrane region" description="Helical" evidence="2">
    <location>
        <begin position="25"/>
        <end position="45"/>
    </location>
</feature>
<feature type="transmembrane region" description="Helical" evidence="2">
    <location>
        <begin position="60"/>
        <end position="80"/>
    </location>
</feature>
<feature type="transmembrane region" description="Helical" evidence="2">
    <location>
        <begin position="100"/>
        <end position="120"/>
    </location>
</feature>
<feature type="transmembrane region" description="Helical" evidence="2">
    <location>
        <begin position="127"/>
        <end position="147"/>
    </location>
</feature>
<feature type="transmembrane region" description="Helical" evidence="2">
    <location>
        <begin position="150"/>
        <end position="170"/>
    </location>
</feature>
<feature type="transmembrane region" description="Helical" evidence="2">
    <location>
        <begin position="187"/>
        <end position="207"/>
    </location>
</feature>
<feature type="transmembrane region" description="Helical" evidence="2">
    <location>
        <begin position="214"/>
        <end position="234"/>
    </location>
</feature>
<feature type="short sequence motif" description="HxxHH motif" evidence="7 8">
    <location>
        <begin position="132"/>
        <end position="136"/>
    </location>
</feature>
<feature type="active site" description="Nucleophile" evidence="1">
    <location>
        <position position="135"/>
    </location>
</feature>
<feature type="glycosylation site" description="N-linked (GlcNAc...) asparagine" evidence="3">
    <location>
        <position position="56"/>
    </location>
</feature>
<feature type="glycosylation site" description="N-linked (GlcNAc...) asparagine" evidence="3">
    <location>
        <position position="89"/>
    </location>
</feature>
<protein>
    <recommendedName>
        <fullName evidence="7 8">Fatty acid elongase 4</fullName>
        <ecNumber evidence="5">2.3.1.-</ecNumber>
    </recommendedName>
    <alternativeName>
        <fullName evidence="7">Beta-ketoacyl-CoA synthase</fullName>
    </alternativeName>
    <alternativeName>
        <fullName evidence="4">Elongation of fatty acids protein</fullName>
    </alternativeName>
    <alternativeName>
        <fullName evidence="8">PUFA Delta5 elongase</fullName>
    </alternativeName>
</protein>
<gene>
    <name evidence="7" type="primary">ELO4</name>
    <name evidence="8" type="synonym">ELO5</name>
    <name evidence="11" type="ORF">Tb05.26C7.100</name>
    <name evidence="10" type="ORF">Tb927.5.4530</name>
</gene>
<accession>Q57X51</accession>
<accession>D6XH37</accession>
<evidence type="ECO:0000250" key="1">
    <source>
        <dbReference type="UniProtKB" id="A1L3X0"/>
    </source>
</evidence>
<evidence type="ECO:0000255" key="2"/>
<evidence type="ECO:0000255" key="3">
    <source>
        <dbReference type="PROSITE-ProRule" id="PRU00498"/>
    </source>
</evidence>
<evidence type="ECO:0000255" key="4">
    <source>
        <dbReference type="RuleBase" id="RU361115"/>
    </source>
</evidence>
<evidence type="ECO:0000269" key="5">
    <source>
    </source>
</evidence>
<evidence type="ECO:0000269" key="6">
    <source>
    </source>
</evidence>
<evidence type="ECO:0000303" key="7">
    <source>
    </source>
</evidence>
<evidence type="ECO:0000303" key="8">
    <source>
    </source>
</evidence>
<evidence type="ECO:0000305" key="9"/>
<evidence type="ECO:0000312" key="10">
    <source>
        <dbReference type="EMBL" id="AAX69821.1"/>
    </source>
</evidence>
<evidence type="ECO:0000312" key="11">
    <source>
        <dbReference type="EMBL" id="AAZ11564.1"/>
    </source>
</evidence>
<evidence type="ECO:0000312" key="12">
    <source>
        <dbReference type="Proteomes" id="UP000008524"/>
    </source>
</evidence>
<proteinExistence type="evidence at protein level"/>
<dbReference type="EC" id="2.3.1.-" evidence="5"/>
<dbReference type="EMBL" id="CP000068">
    <property type="protein sequence ID" value="AAZ11564.1"/>
    <property type="molecule type" value="Genomic_DNA"/>
</dbReference>
<dbReference type="EMBL" id="AC159422">
    <property type="protein sequence ID" value="AAX69821.1"/>
    <property type="molecule type" value="Genomic_DNA"/>
</dbReference>
<dbReference type="RefSeq" id="XP_845123.1">
    <property type="nucleotide sequence ID" value="XM_840030.1"/>
</dbReference>
<dbReference type="SMR" id="Q57X51"/>
<dbReference type="STRING" id="185431.Q57X51"/>
<dbReference type="PaxDb" id="5691-AAZ11564"/>
<dbReference type="GeneID" id="3657564"/>
<dbReference type="KEGG" id="tbr:Tb927.5.4530"/>
<dbReference type="VEuPathDB" id="TriTrypDB:Tb927.5.4530"/>
<dbReference type="eggNOG" id="KOG3071">
    <property type="taxonomic scope" value="Eukaryota"/>
</dbReference>
<dbReference type="InParanoid" id="Q57X51"/>
<dbReference type="OMA" id="AMEVVTH"/>
<dbReference type="OrthoDB" id="434092at2759"/>
<dbReference type="UniPathway" id="UPA00094"/>
<dbReference type="Proteomes" id="UP000008524">
    <property type="component" value="Chromosome 5"/>
</dbReference>
<dbReference type="GO" id="GO:0005789">
    <property type="term" value="C:endoplasmic reticulum membrane"/>
    <property type="evidence" value="ECO:0000318"/>
    <property type="project" value="GO_Central"/>
</dbReference>
<dbReference type="GO" id="GO:0009922">
    <property type="term" value="F:fatty acid elongase activity"/>
    <property type="evidence" value="ECO:0000315"/>
    <property type="project" value="GeneDB"/>
</dbReference>
<dbReference type="GO" id="GO:0034625">
    <property type="term" value="P:fatty acid elongation, monounsaturated fatty acid"/>
    <property type="evidence" value="ECO:0000318"/>
    <property type="project" value="GO_Central"/>
</dbReference>
<dbReference type="GO" id="GO:0034626">
    <property type="term" value="P:fatty acid elongation, polyunsaturated fatty acid"/>
    <property type="evidence" value="ECO:0000315"/>
    <property type="project" value="GeneDB"/>
</dbReference>
<dbReference type="GO" id="GO:0019367">
    <property type="term" value="P:fatty acid elongation, saturated fatty acid"/>
    <property type="evidence" value="ECO:0000318"/>
    <property type="project" value="GO_Central"/>
</dbReference>
<dbReference type="GO" id="GO:0042759">
    <property type="term" value="P:long-chain fatty acid biosynthetic process"/>
    <property type="evidence" value="ECO:0000269"/>
    <property type="project" value="GeneDB"/>
</dbReference>
<dbReference type="GO" id="GO:0030148">
    <property type="term" value="P:sphingolipid biosynthetic process"/>
    <property type="evidence" value="ECO:0000318"/>
    <property type="project" value="GO_Central"/>
</dbReference>
<dbReference type="GO" id="GO:0042761">
    <property type="term" value="P:very long-chain fatty acid biosynthetic process"/>
    <property type="evidence" value="ECO:0000318"/>
    <property type="project" value="GO_Central"/>
</dbReference>
<dbReference type="InterPro" id="IPR030457">
    <property type="entry name" value="ELO_CS"/>
</dbReference>
<dbReference type="InterPro" id="IPR002076">
    <property type="entry name" value="ELO_fam"/>
</dbReference>
<dbReference type="PANTHER" id="PTHR11157:SF133">
    <property type="entry name" value="ELONGATION OF FATTY ACIDS PROTEIN"/>
    <property type="match status" value="1"/>
</dbReference>
<dbReference type="PANTHER" id="PTHR11157">
    <property type="entry name" value="FATTY ACID ACYL TRANSFERASE-RELATED"/>
    <property type="match status" value="1"/>
</dbReference>
<dbReference type="Pfam" id="PF01151">
    <property type="entry name" value="ELO"/>
    <property type="match status" value="1"/>
</dbReference>
<dbReference type="PROSITE" id="PS01188">
    <property type="entry name" value="ELO"/>
    <property type="match status" value="1"/>
</dbReference>
<organism evidence="12">
    <name type="scientific">Trypanosoma brucei brucei (strain 927/4 GUTat10.1)</name>
    <dbReference type="NCBI Taxonomy" id="185431"/>
    <lineage>
        <taxon>Eukaryota</taxon>
        <taxon>Discoba</taxon>
        <taxon>Euglenozoa</taxon>
        <taxon>Kinetoplastea</taxon>
        <taxon>Metakinetoplastina</taxon>
        <taxon>Trypanosomatida</taxon>
        <taxon>Trypanosomatidae</taxon>
        <taxon>Trypanosoma</taxon>
    </lineage>
</organism>
<keyword id="KW-0275">Fatty acid biosynthesis</keyword>
<keyword id="KW-0276">Fatty acid metabolism</keyword>
<keyword id="KW-0325">Glycoprotein</keyword>
<keyword id="KW-0444">Lipid biosynthesis</keyword>
<keyword id="KW-0443">Lipid metabolism</keyword>
<keyword id="KW-0472">Membrane</keyword>
<keyword id="KW-1185">Reference proteome</keyword>
<keyword id="KW-0808">Transferase</keyword>
<keyword id="KW-0812">Transmembrane</keyword>
<keyword id="KW-1133">Transmembrane helix</keyword>